<proteinExistence type="inferred from homology"/>
<sequence>MTEPILQIRDLSVYYNQKKTLKDVSLDLYPNEITALIGPSGSGKSTLLRSINRMNDLNPEVTITGSIVYNGHNIYSPRTDTVDLRKEIGMVFQQPNPFPMSIYENVVYGLRLKGIRDKSILDHAVESSLKGASIWNEVKDRLHDSAVGLSGGQQQRVCIARVLATSPRIILLDEPTSALDPISAGKIEETLLLLKKDYTLAIVTRSMQQASRLSDRTGFFLEGDLLECGPTKAMFMNPKRKETEDYISGKFG</sequence>
<reference key="1">
    <citation type="journal article" date="2002" name="Proc. Natl. Acad. Sci. U.S.A.">
        <title>Genome sequence and comparative microarray analysis of serotype M18 group A Streptococcus strains associated with acute rheumatic fever outbreaks.</title>
        <authorList>
            <person name="Smoot J.C."/>
            <person name="Barbian K.D."/>
            <person name="Van Gompel J.J."/>
            <person name="Smoot L.M."/>
            <person name="Chaussee M.S."/>
            <person name="Sylva G.L."/>
            <person name="Sturdevant D.E."/>
            <person name="Ricklefs S.M."/>
            <person name="Porcella S.F."/>
            <person name="Parkins L.D."/>
            <person name="Beres S.B."/>
            <person name="Campbell D.S."/>
            <person name="Smith T.M."/>
            <person name="Zhang Q."/>
            <person name="Kapur V."/>
            <person name="Daly J.A."/>
            <person name="Veasy L.G."/>
            <person name="Musser J.M."/>
        </authorList>
    </citation>
    <scope>NUCLEOTIDE SEQUENCE [LARGE SCALE GENOMIC DNA]</scope>
    <source>
        <strain>MGAS8232</strain>
    </source>
</reference>
<evidence type="ECO:0000255" key="1">
    <source>
        <dbReference type="HAMAP-Rule" id="MF_01702"/>
    </source>
</evidence>
<protein>
    <recommendedName>
        <fullName evidence="1">Phosphate import ATP-binding protein PstB 1</fullName>
        <ecNumber evidence="1">7.3.2.1</ecNumber>
    </recommendedName>
    <alternativeName>
        <fullName evidence="1">ABC phosphate transporter 1</fullName>
    </alternativeName>
    <alternativeName>
        <fullName evidence="1">Phosphate-transporting ATPase 1</fullName>
    </alternativeName>
</protein>
<dbReference type="EC" id="7.3.2.1" evidence="1"/>
<dbReference type="EMBL" id="AE009949">
    <property type="protein sequence ID" value="AAL97805.1"/>
    <property type="molecule type" value="Genomic_DNA"/>
</dbReference>
<dbReference type="RefSeq" id="WP_002993892.1">
    <property type="nucleotide sequence ID" value="NC_003485.1"/>
</dbReference>
<dbReference type="SMR" id="P63377"/>
<dbReference type="GeneID" id="69900794"/>
<dbReference type="KEGG" id="spm:spyM18_1190"/>
<dbReference type="HOGENOM" id="CLU_000604_1_22_9"/>
<dbReference type="GO" id="GO:0005886">
    <property type="term" value="C:plasma membrane"/>
    <property type="evidence" value="ECO:0007669"/>
    <property type="project" value="UniProtKB-SubCell"/>
</dbReference>
<dbReference type="GO" id="GO:0005524">
    <property type="term" value="F:ATP binding"/>
    <property type="evidence" value="ECO:0007669"/>
    <property type="project" value="UniProtKB-KW"/>
</dbReference>
<dbReference type="GO" id="GO:0016887">
    <property type="term" value="F:ATP hydrolysis activity"/>
    <property type="evidence" value="ECO:0007669"/>
    <property type="project" value="InterPro"/>
</dbReference>
<dbReference type="GO" id="GO:0015415">
    <property type="term" value="F:ATPase-coupled phosphate ion transmembrane transporter activity"/>
    <property type="evidence" value="ECO:0007669"/>
    <property type="project" value="UniProtKB-EC"/>
</dbReference>
<dbReference type="GO" id="GO:0035435">
    <property type="term" value="P:phosphate ion transmembrane transport"/>
    <property type="evidence" value="ECO:0007669"/>
    <property type="project" value="InterPro"/>
</dbReference>
<dbReference type="CDD" id="cd03260">
    <property type="entry name" value="ABC_PstB_phosphate_transporter"/>
    <property type="match status" value="1"/>
</dbReference>
<dbReference type="Gene3D" id="3.40.50.300">
    <property type="entry name" value="P-loop containing nucleotide triphosphate hydrolases"/>
    <property type="match status" value="1"/>
</dbReference>
<dbReference type="InterPro" id="IPR003593">
    <property type="entry name" value="AAA+_ATPase"/>
</dbReference>
<dbReference type="InterPro" id="IPR003439">
    <property type="entry name" value="ABC_transporter-like_ATP-bd"/>
</dbReference>
<dbReference type="InterPro" id="IPR017871">
    <property type="entry name" value="ABC_transporter-like_CS"/>
</dbReference>
<dbReference type="InterPro" id="IPR027417">
    <property type="entry name" value="P-loop_NTPase"/>
</dbReference>
<dbReference type="InterPro" id="IPR005670">
    <property type="entry name" value="PstB-like"/>
</dbReference>
<dbReference type="NCBIfam" id="TIGR00972">
    <property type="entry name" value="3a0107s01c2"/>
    <property type="match status" value="1"/>
</dbReference>
<dbReference type="PANTHER" id="PTHR43423">
    <property type="entry name" value="ABC TRANSPORTER I FAMILY MEMBER 17"/>
    <property type="match status" value="1"/>
</dbReference>
<dbReference type="PANTHER" id="PTHR43423:SF1">
    <property type="entry name" value="ABC TRANSPORTER I FAMILY MEMBER 17"/>
    <property type="match status" value="1"/>
</dbReference>
<dbReference type="Pfam" id="PF00005">
    <property type="entry name" value="ABC_tran"/>
    <property type="match status" value="1"/>
</dbReference>
<dbReference type="SMART" id="SM00382">
    <property type="entry name" value="AAA"/>
    <property type="match status" value="1"/>
</dbReference>
<dbReference type="SUPFAM" id="SSF52540">
    <property type="entry name" value="P-loop containing nucleoside triphosphate hydrolases"/>
    <property type="match status" value="1"/>
</dbReference>
<dbReference type="PROSITE" id="PS00211">
    <property type="entry name" value="ABC_TRANSPORTER_1"/>
    <property type="match status" value="1"/>
</dbReference>
<dbReference type="PROSITE" id="PS50893">
    <property type="entry name" value="ABC_TRANSPORTER_2"/>
    <property type="match status" value="1"/>
</dbReference>
<dbReference type="PROSITE" id="PS51238">
    <property type="entry name" value="PSTB"/>
    <property type="match status" value="1"/>
</dbReference>
<gene>
    <name evidence="1" type="primary">pstB1</name>
    <name type="synonym">pstB</name>
    <name type="ordered locus">spyM18_1190</name>
</gene>
<comment type="function">
    <text evidence="1">Part of the ABC transporter complex PstSACB involved in phosphate import. Responsible for energy coupling to the transport system.</text>
</comment>
<comment type="catalytic activity">
    <reaction evidence="1">
        <text>phosphate(out) + ATP + H2O = ADP + 2 phosphate(in) + H(+)</text>
        <dbReference type="Rhea" id="RHEA:24440"/>
        <dbReference type="ChEBI" id="CHEBI:15377"/>
        <dbReference type="ChEBI" id="CHEBI:15378"/>
        <dbReference type="ChEBI" id="CHEBI:30616"/>
        <dbReference type="ChEBI" id="CHEBI:43474"/>
        <dbReference type="ChEBI" id="CHEBI:456216"/>
        <dbReference type="EC" id="7.3.2.1"/>
    </reaction>
</comment>
<comment type="subunit">
    <text evidence="1">The complex is composed of two ATP-binding proteins (PstB), two transmembrane proteins (PstC and PstA) and a solute-binding protein (PstS).</text>
</comment>
<comment type="subcellular location">
    <subcellularLocation>
        <location evidence="1">Cell membrane</location>
        <topology evidence="1">Peripheral membrane protein</topology>
    </subcellularLocation>
</comment>
<comment type="similarity">
    <text evidence="1">Belongs to the ABC transporter superfamily. Phosphate importer (TC 3.A.1.7) family.</text>
</comment>
<accession>P63377</accession>
<accession>Q8P0V4</accession>
<accession>Q99ZG5</accession>
<keyword id="KW-0067">ATP-binding</keyword>
<keyword id="KW-1003">Cell membrane</keyword>
<keyword id="KW-0472">Membrane</keyword>
<keyword id="KW-0547">Nucleotide-binding</keyword>
<keyword id="KW-0592">Phosphate transport</keyword>
<keyword id="KW-1278">Translocase</keyword>
<keyword id="KW-0813">Transport</keyword>
<name>PSTB1_STRP8</name>
<feature type="chain" id="PRO_0000092909" description="Phosphate import ATP-binding protein PstB 1">
    <location>
        <begin position="1"/>
        <end position="252"/>
    </location>
</feature>
<feature type="domain" description="ABC transporter" evidence="1">
    <location>
        <begin position="6"/>
        <end position="247"/>
    </location>
</feature>
<feature type="binding site" evidence="1">
    <location>
        <begin position="38"/>
        <end position="45"/>
    </location>
    <ligand>
        <name>ATP</name>
        <dbReference type="ChEBI" id="CHEBI:30616"/>
    </ligand>
</feature>
<organism>
    <name type="scientific">Streptococcus pyogenes serotype M18 (strain MGAS8232)</name>
    <dbReference type="NCBI Taxonomy" id="186103"/>
    <lineage>
        <taxon>Bacteria</taxon>
        <taxon>Bacillati</taxon>
        <taxon>Bacillota</taxon>
        <taxon>Bacilli</taxon>
        <taxon>Lactobacillales</taxon>
        <taxon>Streptococcaceae</taxon>
        <taxon>Streptococcus</taxon>
    </lineage>
</organism>